<organism>
    <name type="scientific">Escherichia coli</name>
    <dbReference type="NCBI Taxonomy" id="562"/>
    <lineage>
        <taxon>Bacteria</taxon>
        <taxon>Pseudomonadati</taxon>
        <taxon>Pseudomonadota</taxon>
        <taxon>Gammaproteobacteria</taxon>
        <taxon>Enterobacterales</taxon>
        <taxon>Enterobacteriaceae</taxon>
        <taxon>Escherichia</taxon>
    </lineage>
</organism>
<keyword id="KW-0238">DNA-binding</keyword>
<keyword id="KW-0678">Repressor</keyword>
<keyword id="KW-0804">Transcription</keyword>
<keyword id="KW-0805">Transcription regulation</keyword>
<proteinExistence type="inferred from homology"/>
<comment type="function">
    <text evidence="1">Repressor for the csc operon. Binds D-fructose as an inducer (By similarity).</text>
</comment>
<accession>P62604</accession>
<accession>P40715</accession>
<sequence length="331" mass="36471">MASLKDVARLAGVSMMTVSRVMHNAESVRPATRDRVLQAIQTLNYVPDLSARKMRAQGRKPSTLAVLAQDTATTPFSVDILLAIEQTASEFGWNSFLINIFSEDDAARAARQLLAHRPDGIIYTTMGLRHITLPESLYGENIVLANCVADDPALPSYIPDDYTAQYESTQHLLAAGYRQPLCFWLPESALATGYRRQGFEQAWRDAGRDLAEVKQFHMATGDDHYTDLASLLNAHFKSGKPDFDVLICGNDRAAFVAYQVLLAKGVRIPQDVAVMGFDNLVGVGHLFLPPLTTIQLPHDIIGREAALHIIEGREGGRVTRIPCPLLIRCST</sequence>
<reference key="1">
    <citation type="submission" date="1994-09" db="EMBL/GenBank/DDBJ databases">
        <authorList>
            <person name="Bockmann J."/>
        </authorList>
    </citation>
    <scope>NUCLEOTIDE SEQUENCE [GENOMIC DNA]</scope>
    <source>
        <strain>EC3132</strain>
    </source>
</reference>
<name>CSCR_ECOLX</name>
<gene>
    <name type="primary">cscR</name>
</gene>
<protein>
    <recommendedName>
        <fullName>Sucrose operon repressor</fullName>
    </recommendedName>
    <alternativeName>
        <fullName>Csc operon regulatory protein</fullName>
    </alternativeName>
</protein>
<feature type="chain" id="PRO_0000107996" description="Sucrose operon repressor">
    <location>
        <begin position="1"/>
        <end position="331"/>
    </location>
</feature>
<feature type="domain" description="HTH lacI-type" evidence="2">
    <location>
        <begin position="1"/>
        <end position="56"/>
    </location>
</feature>
<feature type="DNA-binding region" description="H-T-H motif" evidence="2">
    <location>
        <begin position="4"/>
        <end position="23"/>
    </location>
</feature>
<evidence type="ECO:0000250" key="1"/>
<evidence type="ECO:0000255" key="2">
    <source>
        <dbReference type="PROSITE-ProRule" id="PRU00111"/>
    </source>
</evidence>
<dbReference type="EMBL" id="X81461">
    <property type="protein sequence ID" value="CAA57220.1"/>
    <property type="molecule type" value="Genomic_DNA"/>
</dbReference>
<dbReference type="PIR" id="S52163">
    <property type="entry name" value="S52163"/>
</dbReference>
<dbReference type="RefSeq" id="WP_001344440.1">
    <property type="nucleotide sequence ID" value="NZ_WTVD01000077.1"/>
</dbReference>
<dbReference type="SMR" id="P62604"/>
<dbReference type="STRING" id="585034.ECIAI1_2429"/>
<dbReference type="PATRIC" id="fig|562.10478.peg.5931"/>
<dbReference type="GO" id="GO:0003700">
    <property type="term" value="F:DNA-binding transcription factor activity"/>
    <property type="evidence" value="ECO:0007669"/>
    <property type="project" value="TreeGrafter"/>
</dbReference>
<dbReference type="GO" id="GO:0000976">
    <property type="term" value="F:transcription cis-regulatory region binding"/>
    <property type="evidence" value="ECO:0007669"/>
    <property type="project" value="TreeGrafter"/>
</dbReference>
<dbReference type="CDD" id="cd01392">
    <property type="entry name" value="HTH_LacI"/>
    <property type="match status" value="1"/>
</dbReference>
<dbReference type="CDD" id="cd06288">
    <property type="entry name" value="PBP1_sucrose_transcription_regulator"/>
    <property type="match status" value="1"/>
</dbReference>
<dbReference type="Gene3D" id="3.40.50.2300">
    <property type="match status" value="2"/>
</dbReference>
<dbReference type="Gene3D" id="1.10.260.40">
    <property type="entry name" value="lambda repressor-like DNA-binding domains"/>
    <property type="match status" value="1"/>
</dbReference>
<dbReference type="InterPro" id="IPR000843">
    <property type="entry name" value="HTH_LacI"/>
</dbReference>
<dbReference type="InterPro" id="IPR010982">
    <property type="entry name" value="Lambda_DNA-bd_dom_sf"/>
</dbReference>
<dbReference type="InterPro" id="IPR001761">
    <property type="entry name" value="Peripla_BP/Lac1_sug-bd_dom"/>
</dbReference>
<dbReference type="InterPro" id="IPR028082">
    <property type="entry name" value="Peripla_BP_I"/>
</dbReference>
<dbReference type="PANTHER" id="PTHR30146:SF151">
    <property type="entry name" value="HTH-TYPE TRANSCRIPTIONAL REPRESSOR CYTR"/>
    <property type="match status" value="1"/>
</dbReference>
<dbReference type="PANTHER" id="PTHR30146">
    <property type="entry name" value="LACI-RELATED TRANSCRIPTIONAL REPRESSOR"/>
    <property type="match status" value="1"/>
</dbReference>
<dbReference type="Pfam" id="PF00356">
    <property type="entry name" value="LacI"/>
    <property type="match status" value="1"/>
</dbReference>
<dbReference type="Pfam" id="PF00532">
    <property type="entry name" value="Peripla_BP_1"/>
    <property type="match status" value="1"/>
</dbReference>
<dbReference type="PRINTS" id="PR00036">
    <property type="entry name" value="HTHLACI"/>
</dbReference>
<dbReference type="SMART" id="SM00354">
    <property type="entry name" value="HTH_LACI"/>
    <property type="match status" value="1"/>
</dbReference>
<dbReference type="SUPFAM" id="SSF47413">
    <property type="entry name" value="lambda repressor-like DNA-binding domains"/>
    <property type="match status" value="1"/>
</dbReference>
<dbReference type="SUPFAM" id="SSF53822">
    <property type="entry name" value="Periplasmic binding protein-like I"/>
    <property type="match status" value="1"/>
</dbReference>
<dbReference type="PROSITE" id="PS00356">
    <property type="entry name" value="HTH_LACI_1"/>
    <property type="match status" value="1"/>
</dbReference>
<dbReference type="PROSITE" id="PS50932">
    <property type="entry name" value="HTH_LACI_2"/>
    <property type="match status" value="1"/>
</dbReference>